<sequence>MAEKTKAFELRTKNKTQLLEHLKELRTELSSLRVAQVKSPNPSKLAKIGTVRKAIARVLTVFNQTQKNHLRAVYSKKSSSKIPTDLRYKKTRAIRRRLTNKQSKVVTLRVSKTATNFPQRVFAVKA</sequence>
<accession>Q54J23</accession>
<reference key="1">
    <citation type="journal article" date="2005" name="Nature">
        <title>The genome of the social amoeba Dictyostelium discoideum.</title>
        <authorList>
            <person name="Eichinger L."/>
            <person name="Pachebat J.A."/>
            <person name="Gloeckner G."/>
            <person name="Rajandream M.A."/>
            <person name="Sucgang R."/>
            <person name="Berriman M."/>
            <person name="Song J."/>
            <person name="Olsen R."/>
            <person name="Szafranski K."/>
            <person name="Xu Q."/>
            <person name="Tunggal B."/>
            <person name="Kummerfeld S."/>
            <person name="Madera M."/>
            <person name="Konfortov B.A."/>
            <person name="Rivero F."/>
            <person name="Bankier A.T."/>
            <person name="Lehmann R."/>
            <person name="Hamlin N."/>
            <person name="Davies R."/>
            <person name="Gaudet P."/>
            <person name="Fey P."/>
            <person name="Pilcher K."/>
            <person name="Chen G."/>
            <person name="Saunders D."/>
            <person name="Sodergren E.J."/>
            <person name="Davis P."/>
            <person name="Kerhornou A."/>
            <person name="Nie X."/>
            <person name="Hall N."/>
            <person name="Anjard C."/>
            <person name="Hemphill L."/>
            <person name="Bason N."/>
            <person name="Farbrother P."/>
            <person name="Desany B."/>
            <person name="Just E."/>
            <person name="Morio T."/>
            <person name="Rost R."/>
            <person name="Churcher C.M."/>
            <person name="Cooper J."/>
            <person name="Haydock S."/>
            <person name="van Driessche N."/>
            <person name="Cronin A."/>
            <person name="Goodhead I."/>
            <person name="Muzny D.M."/>
            <person name="Mourier T."/>
            <person name="Pain A."/>
            <person name="Lu M."/>
            <person name="Harper D."/>
            <person name="Lindsay R."/>
            <person name="Hauser H."/>
            <person name="James K.D."/>
            <person name="Quiles M."/>
            <person name="Madan Babu M."/>
            <person name="Saito T."/>
            <person name="Buchrieser C."/>
            <person name="Wardroper A."/>
            <person name="Felder M."/>
            <person name="Thangavelu M."/>
            <person name="Johnson D."/>
            <person name="Knights A."/>
            <person name="Loulseged H."/>
            <person name="Mungall K.L."/>
            <person name="Oliver K."/>
            <person name="Price C."/>
            <person name="Quail M.A."/>
            <person name="Urushihara H."/>
            <person name="Hernandez J."/>
            <person name="Rabbinowitsch E."/>
            <person name="Steffen D."/>
            <person name="Sanders M."/>
            <person name="Ma J."/>
            <person name="Kohara Y."/>
            <person name="Sharp S."/>
            <person name="Simmonds M.N."/>
            <person name="Spiegler S."/>
            <person name="Tivey A."/>
            <person name="Sugano S."/>
            <person name="White B."/>
            <person name="Walker D."/>
            <person name="Woodward J.R."/>
            <person name="Winckler T."/>
            <person name="Tanaka Y."/>
            <person name="Shaulsky G."/>
            <person name="Schleicher M."/>
            <person name="Weinstock G.M."/>
            <person name="Rosenthal A."/>
            <person name="Cox E.C."/>
            <person name="Chisholm R.L."/>
            <person name="Gibbs R.A."/>
            <person name="Loomis W.F."/>
            <person name="Platzer M."/>
            <person name="Kay R.R."/>
            <person name="Williams J.G."/>
            <person name="Dear P.H."/>
            <person name="Noegel A.A."/>
            <person name="Barrell B.G."/>
            <person name="Kuspa A."/>
        </authorList>
    </citation>
    <scope>NUCLEOTIDE SEQUENCE [LARGE SCALE GENOMIC DNA]</scope>
    <source>
        <strain>AX4</strain>
    </source>
</reference>
<evidence type="ECO:0000305" key="1"/>
<proteinExistence type="inferred from homology"/>
<feature type="chain" id="PRO_0000320217" description="Large ribosomal subunit protein uL29">
    <location>
        <begin position="1"/>
        <end position="126"/>
    </location>
</feature>
<keyword id="KW-1185">Reference proteome</keyword>
<keyword id="KW-0687">Ribonucleoprotein</keyword>
<keyword id="KW-0689">Ribosomal protein</keyword>
<comment type="similarity">
    <text evidence="1">Belongs to the universal ribosomal protein uL29 family.</text>
</comment>
<protein>
    <recommendedName>
        <fullName evidence="1">Large ribosomal subunit protein uL29</fullName>
    </recommendedName>
    <alternativeName>
        <fullName>60S ribosomal protein L35</fullName>
    </alternativeName>
</protein>
<gene>
    <name type="primary">rpl35</name>
    <name type="ORF">DDB_G0288349</name>
</gene>
<dbReference type="EMBL" id="AAFI02000111">
    <property type="protein sequence ID" value="EAL63271.1"/>
    <property type="molecule type" value="Genomic_DNA"/>
</dbReference>
<dbReference type="RefSeq" id="XP_636778.1">
    <property type="nucleotide sequence ID" value="XM_631686.1"/>
</dbReference>
<dbReference type="SMR" id="Q54J23"/>
<dbReference type="FunCoup" id="Q54J23">
    <property type="interactions" value="587"/>
</dbReference>
<dbReference type="STRING" id="44689.Q54J23"/>
<dbReference type="PaxDb" id="44689-DDB0231152"/>
<dbReference type="EnsemblProtists" id="EAL63271">
    <property type="protein sequence ID" value="EAL63271"/>
    <property type="gene ID" value="DDB_G0288349"/>
</dbReference>
<dbReference type="GeneID" id="8626581"/>
<dbReference type="KEGG" id="ddi:DDB_G0288349"/>
<dbReference type="dictyBase" id="DDB_G0288349">
    <property type="gene designation" value="rpl35"/>
</dbReference>
<dbReference type="VEuPathDB" id="AmoebaDB:DDB_G0288349"/>
<dbReference type="eggNOG" id="KOG3436">
    <property type="taxonomic scope" value="Eukaryota"/>
</dbReference>
<dbReference type="HOGENOM" id="CLU_110381_1_1_1"/>
<dbReference type="InParanoid" id="Q54J23"/>
<dbReference type="OMA" id="VMNQKAR"/>
<dbReference type="PhylomeDB" id="Q54J23"/>
<dbReference type="Reactome" id="R-DDI-156827">
    <property type="pathway name" value="L13a-mediated translational silencing of Ceruloplasmin expression"/>
</dbReference>
<dbReference type="Reactome" id="R-DDI-1799339">
    <property type="pathway name" value="SRP-dependent cotranslational protein targeting to membrane"/>
</dbReference>
<dbReference type="Reactome" id="R-DDI-72689">
    <property type="pathway name" value="Formation of a pool of free 40S subunits"/>
</dbReference>
<dbReference type="Reactome" id="R-DDI-72706">
    <property type="pathway name" value="GTP hydrolysis and joining of the 60S ribosomal subunit"/>
</dbReference>
<dbReference type="Reactome" id="R-DDI-975956">
    <property type="pathway name" value="Nonsense Mediated Decay (NMD) independent of the Exon Junction Complex (EJC)"/>
</dbReference>
<dbReference type="Reactome" id="R-DDI-975957">
    <property type="pathway name" value="Nonsense Mediated Decay (NMD) enhanced by the Exon Junction Complex (EJC)"/>
</dbReference>
<dbReference type="PRO" id="PR:Q54J23"/>
<dbReference type="Proteomes" id="UP000002195">
    <property type="component" value="Chromosome 5"/>
</dbReference>
<dbReference type="GO" id="GO:0022625">
    <property type="term" value="C:cytosolic large ribosomal subunit"/>
    <property type="evidence" value="ECO:0000318"/>
    <property type="project" value="GO_Central"/>
</dbReference>
<dbReference type="GO" id="GO:0003729">
    <property type="term" value="F:mRNA binding"/>
    <property type="evidence" value="ECO:0000318"/>
    <property type="project" value="GO_Central"/>
</dbReference>
<dbReference type="GO" id="GO:0003735">
    <property type="term" value="F:structural constituent of ribosome"/>
    <property type="evidence" value="ECO:0000250"/>
    <property type="project" value="dictyBase"/>
</dbReference>
<dbReference type="GO" id="GO:0000463">
    <property type="term" value="P:maturation of LSU-rRNA from tricistronic rRNA transcript (SSU-rRNA, 5.8S rRNA, LSU-rRNA)"/>
    <property type="evidence" value="ECO:0000318"/>
    <property type="project" value="GO_Central"/>
</dbReference>
<dbReference type="GO" id="GO:0006412">
    <property type="term" value="P:translation"/>
    <property type="evidence" value="ECO:0000250"/>
    <property type="project" value="dictyBase"/>
</dbReference>
<dbReference type="CDD" id="cd00427">
    <property type="entry name" value="Ribosomal_L29_HIP"/>
    <property type="match status" value="1"/>
</dbReference>
<dbReference type="FunFam" id="1.10.287.310:FF:000002">
    <property type="entry name" value="60S ribosomal protein L35"/>
    <property type="match status" value="1"/>
</dbReference>
<dbReference type="FunFam" id="6.10.250.3450:FF:000001">
    <property type="entry name" value="60S ribosomal protein L35"/>
    <property type="match status" value="1"/>
</dbReference>
<dbReference type="Gene3D" id="1.10.287.310">
    <property type="match status" value="1"/>
</dbReference>
<dbReference type="Gene3D" id="6.10.250.3450">
    <property type="match status" value="1"/>
</dbReference>
<dbReference type="HAMAP" id="MF_00374">
    <property type="entry name" value="Ribosomal_uL29"/>
    <property type="match status" value="1"/>
</dbReference>
<dbReference type="InterPro" id="IPR001854">
    <property type="entry name" value="Ribosomal_uL29"/>
</dbReference>
<dbReference type="InterPro" id="IPR018254">
    <property type="entry name" value="Ribosomal_uL29_CS"/>
</dbReference>
<dbReference type="InterPro" id="IPR045059">
    <property type="entry name" value="Ribosomal_uL29_euk"/>
</dbReference>
<dbReference type="InterPro" id="IPR036049">
    <property type="entry name" value="Ribosomal_uL29_sf"/>
</dbReference>
<dbReference type="NCBIfam" id="TIGR00012">
    <property type="entry name" value="L29"/>
    <property type="match status" value="1"/>
</dbReference>
<dbReference type="PANTHER" id="PTHR45722">
    <property type="entry name" value="60S RIBOSOMAL PROTEIN L35"/>
    <property type="match status" value="1"/>
</dbReference>
<dbReference type="PANTHER" id="PTHR45722:SF2">
    <property type="entry name" value="LARGE RIBOSOMAL SUBUNIT PROTEIN UL29-RELATED"/>
    <property type="match status" value="1"/>
</dbReference>
<dbReference type="Pfam" id="PF00831">
    <property type="entry name" value="Ribosomal_L29"/>
    <property type="match status" value="1"/>
</dbReference>
<dbReference type="SUPFAM" id="SSF46561">
    <property type="entry name" value="Ribosomal protein L29 (L29p)"/>
    <property type="match status" value="1"/>
</dbReference>
<dbReference type="PROSITE" id="PS00579">
    <property type="entry name" value="RIBOSOMAL_L29"/>
    <property type="match status" value="1"/>
</dbReference>
<name>RL35_DICDI</name>
<organism>
    <name type="scientific">Dictyostelium discoideum</name>
    <name type="common">Social amoeba</name>
    <dbReference type="NCBI Taxonomy" id="44689"/>
    <lineage>
        <taxon>Eukaryota</taxon>
        <taxon>Amoebozoa</taxon>
        <taxon>Evosea</taxon>
        <taxon>Eumycetozoa</taxon>
        <taxon>Dictyostelia</taxon>
        <taxon>Dictyosteliales</taxon>
        <taxon>Dictyosteliaceae</taxon>
        <taxon>Dictyostelium</taxon>
    </lineage>
</organism>